<evidence type="ECO:0000255" key="1">
    <source>
        <dbReference type="PROSITE-ProRule" id="PRU00434"/>
    </source>
</evidence>
<evidence type="ECO:0000269" key="2">
    <source>
    </source>
</evidence>
<evidence type="ECO:0000269" key="3">
    <source>
    </source>
</evidence>
<evidence type="ECO:0000269" key="4">
    <source>
    </source>
</evidence>
<evidence type="ECO:0000305" key="5"/>
<organism>
    <name type="scientific">Bacillus subtilis (strain 168)</name>
    <dbReference type="NCBI Taxonomy" id="224308"/>
    <lineage>
        <taxon>Bacteria</taxon>
        <taxon>Bacillati</taxon>
        <taxon>Bacillota</taxon>
        <taxon>Bacilli</taxon>
        <taxon>Bacillales</taxon>
        <taxon>Bacillaceae</taxon>
        <taxon>Bacillus</taxon>
    </lineage>
</organism>
<sequence>MSILDIHDVSVWYERDNVILEQVDLHLEKGAVYGLLGVNGAGKTTLINTLTGVNRNFSGRFTLCGIEAEAGMPQKTSDQLKTHRYFAADYPLLFTEITAKDYVSFVHSLYQKDFSEQQFASLAEAFHFSKYINRRISELSLGNRQKVVLMTGLLLRAPLFILDEPLVGLDVESIEVFYQKMREYCEAGGTILFSSHLLDVVQRFCDYAAILHNKQIQKVIPIGEETDLRREFFEVIGHE</sequence>
<gene>
    <name type="primary">albC</name>
    <name type="synonym">ywhQ</name>
    <name type="ordered locus">BSU37390</name>
</gene>
<name>ALBC_BACSU</name>
<feature type="chain" id="PRO_0000091925" description="Putative ABC transporter ATP-binding protein AlbC">
    <location>
        <begin position="1"/>
        <end position="239"/>
    </location>
</feature>
<feature type="domain" description="ABC transporter" evidence="1">
    <location>
        <begin position="4"/>
        <end position="238"/>
    </location>
</feature>
<feature type="binding site" evidence="1">
    <location>
        <begin position="37"/>
        <end position="44"/>
    </location>
    <ligand>
        <name>ATP</name>
        <dbReference type="ChEBI" id="CHEBI:30616"/>
    </ligand>
</feature>
<feature type="sequence variant" description="In strain: ATCC 6633.">
    <original>Q</original>
    <variation>H</variation>
    <location>
        <position position="22"/>
    </location>
</feature>
<feature type="sequence variant" description="In strain: ATCC 6633.">
    <original>F</original>
    <variation>Y</variation>
    <location>
        <position position="57"/>
    </location>
</feature>
<feature type="sequence variant" description="In strain: ATCC 6633.">
    <original>R</original>
    <variation>G</variation>
    <location>
        <position position="60"/>
    </location>
</feature>
<feature type="sequence variant" description="In strain: ATCC 6633.">
    <original>T</original>
    <variation>I</variation>
    <location>
        <position position="82"/>
    </location>
</feature>
<feature type="sequence variant" description="In strain: ATCC 6633.">
    <original>Q</original>
    <variation>R</variation>
    <location>
        <position position="117"/>
    </location>
</feature>
<feature type="sequence variant" description="In strain: ATCC 6633.">
    <original>A</original>
    <variation>E</variation>
    <location>
        <position position="187"/>
    </location>
</feature>
<feature type="sequence variant" description="In strain: ATCC 6633.">
    <original>Y</original>
    <variation>F</variation>
    <location>
        <position position="207"/>
    </location>
</feature>
<reference key="1">
    <citation type="submission" date="2002-02" db="EMBL/GenBank/DDBJ databases">
        <title>Subtilosin A biosynthesis is conserved among two different classes of Bacillus subtilis strains.</title>
        <authorList>
            <person name="Stein T."/>
            <person name="Duesterhus S."/>
            <person name="Entian K.-D."/>
        </authorList>
    </citation>
    <scope>NUCLEOTIDE SEQUENCE [GENOMIC DNA]</scope>
    <source>
        <strain>ATCC 6633 / PCI 219 / NRS 231</strain>
    </source>
</reference>
<reference key="2">
    <citation type="journal article" date="1997" name="Microbiology">
        <title>The Bacillus subtilis genome from gerBC (311 degrees) to licR (334 degrees).</title>
        <authorList>
            <person name="Presecan E."/>
            <person name="Moszer I."/>
            <person name="Boursier L."/>
            <person name="Cruz Ramos H."/>
            <person name="De La Fuente V."/>
            <person name="Hullo M.-F."/>
            <person name="Lelong C."/>
            <person name="Schleich S."/>
            <person name="Sekowska A."/>
            <person name="Song B.H."/>
            <person name="Villani G."/>
            <person name="Kunst F."/>
            <person name="Danchin A."/>
            <person name="Glaser P."/>
        </authorList>
    </citation>
    <scope>NUCLEOTIDE SEQUENCE [GENOMIC DNA]</scope>
    <source>
        <strain>168</strain>
    </source>
</reference>
<reference key="3">
    <citation type="journal article" date="1997" name="Nature">
        <title>The complete genome sequence of the Gram-positive bacterium Bacillus subtilis.</title>
        <authorList>
            <person name="Kunst F."/>
            <person name="Ogasawara N."/>
            <person name="Moszer I."/>
            <person name="Albertini A.M."/>
            <person name="Alloni G."/>
            <person name="Azevedo V."/>
            <person name="Bertero M.G."/>
            <person name="Bessieres P."/>
            <person name="Bolotin A."/>
            <person name="Borchert S."/>
            <person name="Borriss R."/>
            <person name="Boursier L."/>
            <person name="Brans A."/>
            <person name="Braun M."/>
            <person name="Brignell S.C."/>
            <person name="Bron S."/>
            <person name="Brouillet S."/>
            <person name="Bruschi C.V."/>
            <person name="Caldwell B."/>
            <person name="Capuano V."/>
            <person name="Carter N.M."/>
            <person name="Choi S.-K."/>
            <person name="Codani J.-J."/>
            <person name="Connerton I.F."/>
            <person name="Cummings N.J."/>
            <person name="Daniel R.A."/>
            <person name="Denizot F."/>
            <person name="Devine K.M."/>
            <person name="Duesterhoeft A."/>
            <person name="Ehrlich S.D."/>
            <person name="Emmerson P.T."/>
            <person name="Entian K.-D."/>
            <person name="Errington J."/>
            <person name="Fabret C."/>
            <person name="Ferrari E."/>
            <person name="Foulger D."/>
            <person name="Fritz C."/>
            <person name="Fujita M."/>
            <person name="Fujita Y."/>
            <person name="Fuma S."/>
            <person name="Galizzi A."/>
            <person name="Galleron N."/>
            <person name="Ghim S.-Y."/>
            <person name="Glaser P."/>
            <person name="Goffeau A."/>
            <person name="Golightly E.J."/>
            <person name="Grandi G."/>
            <person name="Guiseppi G."/>
            <person name="Guy B.J."/>
            <person name="Haga K."/>
            <person name="Haiech J."/>
            <person name="Harwood C.R."/>
            <person name="Henaut A."/>
            <person name="Hilbert H."/>
            <person name="Holsappel S."/>
            <person name="Hosono S."/>
            <person name="Hullo M.-F."/>
            <person name="Itaya M."/>
            <person name="Jones L.-M."/>
            <person name="Joris B."/>
            <person name="Karamata D."/>
            <person name="Kasahara Y."/>
            <person name="Klaerr-Blanchard M."/>
            <person name="Klein C."/>
            <person name="Kobayashi Y."/>
            <person name="Koetter P."/>
            <person name="Koningstein G."/>
            <person name="Krogh S."/>
            <person name="Kumano M."/>
            <person name="Kurita K."/>
            <person name="Lapidus A."/>
            <person name="Lardinois S."/>
            <person name="Lauber J."/>
            <person name="Lazarevic V."/>
            <person name="Lee S.-M."/>
            <person name="Levine A."/>
            <person name="Liu H."/>
            <person name="Masuda S."/>
            <person name="Mauel C."/>
            <person name="Medigue C."/>
            <person name="Medina N."/>
            <person name="Mellado R.P."/>
            <person name="Mizuno M."/>
            <person name="Moestl D."/>
            <person name="Nakai S."/>
            <person name="Noback M."/>
            <person name="Noone D."/>
            <person name="O'Reilly M."/>
            <person name="Ogawa K."/>
            <person name="Ogiwara A."/>
            <person name="Oudega B."/>
            <person name="Park S.-H."/>
            <person name="Parro V."/>
            <person name="Pohl T.M."/>
            <person name="Portetelle D."/>
            <person name="Porwollik S."/>
            <person name="Prescott A.M."/>
            <person name="Presecan E."/>
            <person name="Pujic P."/>
            <person name="Purnelle B."/>
            <person name="Rapoport G."/>
            <person name="Rey M."/>
            <person name="Reynolds S."/>
            <person name="Rieger M."/>
            <person name="Rivolta C."/>
            <person name="Rocha E."/>
            <person name="Roche B."/>
            <person name="Rose M."/>
            <person name="Sadaie Y."/>
            <person name="Sato T."/>
            <person name="Scanlan E."/>
            <person name="Schleich S."/>
            <person name="Schroeter R."/>
            <person name="Scoffone F."/>
            <person name="Sekiguchi J."/>
            <person name="Sekowska A."/>
            <person name="Seror S.J."/>
            <person name="Serror P."/>
            <person name="Shin B.-S."/>
            <person name="Soldo B."/>
            <person name="Sorokin A."/>
            <person name="Tacconi E."/>
            <person name="Takagi T."/>
            <person name="Takahashi H."/>
            <person name="Takemaru K."/>
            <person name="Takeuchi M."/>
            <person name="Tamakoshi A."/>
            <person name="Tanaka T."/>
            <person name="Terpstra P."/>
            <person name="Tognoni A."/>
            <person name="Tosato V."/>
            <person name="Uchiyama S."/>
            <person name="Vandenbol M."/>
            <person name="Vannier F."/>
            <person name="Vassarotti A."/>
            <person name="Viari A."/>
            <person name="Wambutt R."/>
            <person name="Wedler E."/>
            <person name="Wedler H."/>
            <person name="Weitzenegger T."/>
            <person name="Winters P."/>
            <person name="Wipat A."/>
            <person name="Yamamoto H."/>
            <person name="Yamane K."/>
            <person name="Yasumoto K."/>
            <person name="Yata K."/>
            <person name="Yoshida K."/>
            <person name="Yoshikawa H.-F."/>
            <person name="Zumstein E."/>
            <person name="Yoshikawa H."/>
            <person name="Danchin A."/>
        </authorList>
    </citation>
    <scope>NUCLEOTIDE SEQUENCE [LARGE SCALE GENOMIC DNA]</scope>
    <source>
        <strain>168</strain>
    </source>
</reference>
<reference key="4">
    <citation type="journal article" date="1999" name="J. Bacteriol.">
        <title>Genes of the sbo-alb locus of Bacillus subtilis are required for production of the antilisterial bacteriocin subtilosin.</title>
        <authorList>
            <person name="Zheng G."/>
            <person name="Yan L.Z."/>
            <person name="Vederas J.C."/>
            <person name="Zuber P."/>
        </authorList>
    </citation>
    <scope>FUNCTION</scope>
    <source>
        <strain>168 / JH642</strain>
        <strain>22a</strain>
    </source>
</reference>
<reference key="5">
    <citation type="journal article" date="2000" name="J. Bacteriol.">
        <title>Mutational analysis of the sbo-alb locus of Bacillus subtilis: identification of genes required for subtilosin production and immunity.</title>
        <authorList>
            <person name="Zheng G."/>
            <person name="Hehn R."/>
            <person name="Zuber P."/>
        </authorList>
    </citation>
    <scope>FUNCTION</scope>
    <source>
        <strain>168 / JH642</strain>
    </source>
</reference>
<reference key="6">
    <citation type="journal article" date="2000" name="J. Bacteriol.">
        <title>Dual control of sbo-alb operon expression by the Spo0 and ResDE systems of signal transduction under anaerobic conditions in Bacillus subtilis.</title>
        <authorList>
            <person name="Nakano M.M."/>
            <person name="Zheng G."/>
            <person name="Zuber P."/>
        </authorList>
    </citation>
    <scope>TRANSCRIPTIONAL REGULATION</scope>
    <source>
        <strain>168 / JH642</strain>
    </source>
</reference>
<keyword id="KW-0067">ATP-binding</keyword>
<keyword id="KW-0079">Bacteriocin immunity</keyword>
<keyword id="KW-0080">Bacteriocin transport</keyword>
<keyword id="KW-0547">Nucleotide-binding</keyword>
<keyword id="KW-0653">Protein transport</keyword>
<keyword id="KW-1185">Reference proteome</keyword>
<keyword id="KW-0813">Transport</keyword>
<dbReference type="EMBL" id="AJ430547">
    <property type="protein sequence ID" value="CAD23201.1"/>
    <property type="molecule type" value="Genomic_DNA"/>
</dbReference>
<dbReference type="EMBL" id="Z80360">
    <property type="protein sequence ID" value="CAB02507.1"/>
    <property type="molecule type" value="Genomic_DNA"/>
</dbReference>
<dbReference type="EMBL" id="AL009126">
    <property type="protein sequence ID" value="CAB15766.1"/>
    <property type="molecule type" value="Genomic_DNA"/>
</dbReference>
<dbReference type="PIR" id="H70058">
    <property type="entry name" value="H70058"/>
</dbReference>
<dbReference type="RefSeq" id="NP_391619.1">
    <property type="nucleotide sequence ID" value="NC_000964.3"/>
</dbReference>
<dbReference type="RefSeq" id="WP_003227564.1">
    <property type="nucleotide sequence ID" value="NZ_OZ025638.1"/>
</dbReference>
<dbReference type="SMR" id="P71009"/>
<dbReference type="FunCoup" id="P71009">
    <property type="interactions" value="18"/>
</dbReference>
<dbReference type="STRING" id="224308.BSU37390"/>
<dbReference type="jPOST" id="P71009"/>
<dbReference type="PaxDb" id="224308-BSU37390"/>
<dbReference type="EnsemblBacteria" id="CAB15766">
    <property type="protein sequence ID" value="CAB15766"/>
    <property type="gene ID" value="BSU_37390"/>
</dbReference>
<dbReference type="GeneID" id="937068"/>
<dbReference type="KEGG" id="bsu:BSU37390"/>
<dbReference type="PATRIC" id="fig|224308.179.peg.4049"/>
<dbReference type="eggNOG" id="COG1131">
    <property type="taxonomic scope" value="Bacteria"/>
</dbReference>
<dbReference type="InParanoid" id="P71009"/>
<dbReference type="OrthoDB" id="9804819at2"/>
<dbReference type="PhylomeDB" id="P71009"/>
<dbReference type="BioCyc" id="BSUB:BSU37390-MONOMER"/>
<dbReference type="Proteomes" id="UP000001570">
    <property type="component" value="Chromosome"/>
</dbReference>
<dbReference type="GO" id="GO:0005524">
    <property type="term" value="F:ATP binding"/>
    <property type="evidence" value="ECO:0007669"/>
    <property type="project" value="UniProtKB-KW"/>
</dbReference>
<dbReference type="GO" id="GO:0016887">
    <property type="term" value="F:ATP hydrolysis activity"/>
    <property type="evidence" value="ECO:0007669"/>
    <property type="project" value="InterPro"/>
</dbReference>
<dbReference type="GO" id="GO:0030153">
    <property type="term" value="P:bacteriocin immunity"/>
    <property type="evidence" value="ECO:0007669"/>
    <property type="project" value="UniProtKB-KW"/>
</dbReference>
<dbReference type="GO" id="GO:0043213">
    <property type="term" value="P:bacteriocin transport"/>
    <property type="evidence" value="ECO:0007669"/>
    <property type="project" value="UniProtKB-KW"/>
</dbReference>
<dbReference type="GO" id="GO:0015031">
    <property type="term" value="P:protein transport"/>
    <property type="evidence" value="ECO:0007669"/>
    <property type="project" value="UniProtKB-KW"/>
</dbReference>
<dbReference type="CDD" id="cd03230">
    <property type="entry name" value="ABC_DR_subfamily_A"/>
    <property type="match status" value="1"/>
</dbReference>
<dbReference type="Gene3D" id="3.40.50.300">
    <property type="entry name" value="P-loop containing nucleotide triphosphate hydrolases"/>
    <property type="match status" value="1"/>
</dbReference>
<dbReference type="InterPro" id="IPR003439">
    <property type="entry name" value="ABC_transporter-like_ATP-bd"/>
</dbReference>
<dbReference type="InterPro" id="IPR051782">
    <property type="entry name" value="ABC_Transporter_VariousFunc"/>
</dbReference>
<dbReference type="InterPro" id="IPR027417">
    <property type="entry name" value="P-loop_NTPase"/>
</dbReference>
<dbReference type="PANTHER" id="PTHR42939">
    <property type="entry name" value="ABC TRANSPORTER ATP-BINDING PROTEIN ALBC-RELATED"/>
    <property type="match status" value="1"/>
</dbReference>
<dbReference type="PANTHER" id="PTHR42939:SF1">
    <property type="entry name" value="ABC TRANSPORTER ATP-BINDING PROTEIN ALBC-RELATED"/>
    <property type="match status" value="1"/>
</dbReference>
<dbReference type="Pfam" id="PF00005">
    <property type="entry name" value="ABC_tran"/>
    <property type="match status" value="1"/>
</dbReference>
<dbReference type="SUPFAM" id="SSF52540">
    <property type="entry name" value="P-loop containing nucleoside triphosphate hydrolases"/>
    <property type="match status" value="1"/>
</dbReference>
<dbReference type="PROSITE" id="PS50893">
    <property type="entry name" value="ABC_TRANSPORTER_2"/>
    <property type="match status" value="1"/>
</dbReference>
<accession>P71009</accession>
<accession>Q8RKH5</accession>
<protein>
    <recommendedName>
        <fullName>Putative ABC transporter ATP-binding protein AlbC</fullName>
    </recommendedName>
    <alternativeName>
        <fullName>Antilisterial bacteriocin subtilosin biosynthesis protein AlbC</fullName>
    </alternativeName>
</protein>
<proteinExistence type="evidence at transcript level"/>
<comment type="function">
    <text evidence="2 3">Involved in the production of the bacteriocin subtilosin. Required for immunity to subtilosin.</text>
</comment>
<comment type="induction">
    <text evidence="4">Transcription is highly induced by oxygen limitation and is under dual and independent control of Spo0A-AbrB and ResDE.</text>
</comment>
<comment type="similarity">
    <text evidence="5">Belongs to the ABC transporter superfamily.</text>
</comment>